<dbReference type="EC" id="2.7.7.7"/>
<dbReference type="EMBL" id="L11920">
    <property type="protein sequence ID" value="AAB46393.1"/>
    <property type="molecule type" value="Genomic_DNA"/>
</dbReference>
<dbReference type="EMBL" id="AL123456">
    <property type="protein sequence ID" value="CCP44393.1"/>
    <property type="molecule type" value="Genomic_DNA"/>
</dbReference>
<dbReference type="PIR" id="C70559">
    <property type="entry name" value="C70559"/>
</dbReference>
<dbReference type="RefSeq" id="NP_216145.1">
    <property type="nucleotide sequence ID" value="NC_000962.3"/>
</dbReference>
<dbReference type="RefSeq" id="WP_003408063.1">
    <property type="nucleotide sequence ID" value="NZ_NVQJ01000016.1"/>
</dbReference>
<dbReference type="SMR" id="P9WNU5"/>
<dbReference type="FunCoup" id="P9WNU5">
    <property type="interactions" value="38"/>
</dbReference>
<dbReference type="STRING" id="83332.Rv1629"/>
<dbReference type="PaxDb" id="83332-Rv1629"/>
<dbReference type="GeneID" id="885074"/>
<dbReference type="KEGG" id="mtu:Rv1629"/>
<dbReference type="KEGG" id="mtv:RVBD_1629"/>
<dbReference type="TubercuList" id="Rv1629"/>
<dbReference type="eggNOG" id="COG0258">
    <property type="taxonomic scope" value="Bacteria"/>
</dbReference>
<dbReference type="eggNOG" id="COG0749">
    <property type="taxonomic scope" value="Bacteria"/>
</dbReference>
<dbReference type="InParanoid" id="P9WNU5"/>
<dbReference type="OrthoDB" id="9806424at2"/>
<dbReference type="PhylomeDB" id="P9WNU5"/>
<dbReference type="Proteomes" id="UP000001584">
    <property type="component" value="Chromosome"/>
</dbReference>
<dbReference type="GO" id="GO:0009274">
    <property type="term" value="C:peptidoglycan-based cell wall"/>
    <property type="evidence" value="ECO:0007005"/>
    <property type="project" value="MTBBASE"/>
</dbReference>
<dbReference type="GO" id="GO:0005886">
    <property type="term" value="C:plasma membrane"/>
    <property type="evidence" value="ECO:0007005"/>
    <property type="project" value="MTBBASE"/>
</dbReference>
<dbReference type="GO" id="GO:0008408">
    <property type="term" value="F:3'-5' exonuclease activity"/>
    <property type="evidence" value="ECO:0007669"/>
    <property type="project" value="InterPro"/>
</dbReference>
<dbReference type="GO" id="GO:0008409">
    <property type="term" value="F:5'-3' exonuclease activity"/>
    <property type="evidence" value="ECO:0007669"/>
    <property type="project" value="InterPro"/>
</dbReference>
<dbReference type="GO" id="GO:0003677">
    <property type="term" value="F:DNA binding"/>
    <property type="evidence" value="ECO:0007669"/>
    <property type="project" value="UniProtKB-KW"/>
</dbReference>
<dbReference type="GO" id="GO:0003887">
    <property type="term" value="F:DNA-directed DNA polymerase activity"/>
    <property type="evidence" value="ECO:0000318"/>
    <property type="project" value="GO_Central"/>
</dbReference>
<dbReference type="GO" id="GO:0006261">
    <property type="term" value="P:DNA-templated DNA replication"/>
    <property type="evidence" value="ECO:0007669"/>
    <property type="project" value="InterPro"/>
</dbReference>
<dbReference type="GO" id="GO:0006302">
    <property type="term" value="P:double-strand break repair"/>
    <property type="evidence" value="ECO:0000318"/>
    <property type="project" value="GO_Central"/>
</dbReference>
<dbReference type="CDD" id="cd08637">
    <property type="entry name" value="DNA_pol_A_pol_I_C"/>
    <property type="match status" value="1"/>
</dbReference>
<dbReference type="CDD" id="cd06140">
    <property type="entry name" value="DNA_polA_I_Bacillus_like_exo"/>
    <property type="match status" value="1"/>
</dbReference>
<dbReference type="CDD" id="cd09898">
    <property type="entry name" value="H3TH_53EXO"/>
    <property type="match status" value="1"/>
</dbReference>
<dbReference type="CDD" id="cd09859">
    <property type="entry name" value="PIN_53EXO"/>
    <property type="match status" value="1"/>
</dbReference>
<dbReference type="FunFam" id="1.10.150.20:FF:000002">
    <property type="entry name" value="DNA polymerase I"/>
    <property type="match status" value="1"/>
</dbReference>
<dbReference type="FunFam" id="1.10.150.20:FF:000003">
    <property type="entry name" value="DNA polymerase I"/>
    <property type="match status" value="1"/>
</dbReference>
<dbReference type="FunFam" id="1.20.1060.10:FF:000001">
    <property type="entry name" value="DNA polymerase I"/>
    <property type="match status" value="1"/>
</dbReference>
<dbReference type="FunFam" id="3.40.50.1010:FF:000001">
    <property type="entry name" value="DNA polymerase I"/>
    <property type="match status" value="1"/>
</dbReference>
<dbReference type="Gene3D" id="3.30.70.370">
    <property type="match status" value="1"/>
</dbReference>
<dbReference type="Gene3D" id="1.10.150.20">
    <property type="entry name" value="5' to 3' exonuclease, C-terminal subdomain"/>
    <property type="match status" value="2"/>
</dbReference>
<dbReference type="Gene3D" id="3.40.50.1010">
    <property type="entry name" value="5'-nuclease"/>
    <property type="match status" value="1"/>
</dbReference>
<dbReference type="Gene3D" id="3.30.420.10">
    <property type="entry name" value="Ribonuclease H-like superfamily/Ribonuclease H"/>
    <property type="match status" value="1"/>
</dbReference>
<dbReference type="Gene3D" id="1.20.1060.10">
    <property type="entry name" value="Taq DNA Polymerase, Chain T, domain 4"/>
    <property type="match status" value="1"/>
</dbReference>
<dbReference type="InterPro" id="IPR002562">
    <property type="entry name" value="3'-5'_exonuclease_dom"/>
</dbReference>
<dbReference type="InterPro" id="IPR020046">
    <property type="entry name" value="5-3_exonucl_a-hlix_arch_N"/>
</dbReference>
<dbReference type="InterPro" id="IPR002421">
    <property type="entry name" value="5-3_exonuclease"/>
</dbReference>
<dbReference type="InterPro" id="IPR036279">
    <property type="entry name" value="5-3_exonuclease_C_sf"/>
</dbReference>
<dbReference type="InterPro" id="IPR019760">
    <property type="entry name" value="DNA-dir_DNA_pol_A_CS"/>
</dbReference>
<dbReference type="InterPro" id="IPR001098">
    <property type="entry name" value="DNA-dir_DNA_pol_A_palm_dom"/>
</dbReference>
<dbReference type="InterPro" id="IPR043502">
    <property type="entry name" value="DNA/RNA_pol_sf"/>
</dbReference>
<dbReference type="InterPro" id="IPR054690">
    <property type="entry name" value="DNA_polI_exonuclease"/>
</dbReference>
<dbReference type="InterPro" id="IPR020045">
    <property type="entry name" value="DNA_polI_H3TH"/>
</dbReference>
<dbReference type="InterPro" id="IPR018320">
    <property type="entry name" value="DNA_polymerase_1"/>
</dbReference>
<dbReference type="InterPro" id="IPR002298">
    <property type="entry name" value="DNA_polymerase_A"/>
</dbReference>
<dbReference type="InterPro" id="IPR008918">
    <property type="entry name" value="HhH2"/>
</dbReference>
<dbReference type="InterPro" id="IPR029060">
    <property type="entry name" value="PIN-like_dom_sf"/>
</dbReference>
<dbReference type="InterPro" id="IPR012337">
    <property type="entry name" value="RNaseH-like_sf"/>
</dbReference>
<dbReference type="InterPro" id="IPR036397">
    <property type="entry name" value="RNaseH_sf"/>
</dbReference>
<dbReference type="NCBIfam" id="TIGR00593">
    <property type="entry name" value="pola"/>
    <property type="match status" value="1"/>
</dbReference>
<dbReference type="NCBIfam" id="NF004397">
    <property type="entry name" value="PRK05755.1"/>
    <property type="match status" value="1"/>
</dbReference>
<dbReference type="PANTHER" id="PTHR10133">
    <property type="entry name" value="DNA POLYMERASE I"/>
    <property type="match status" value="1"/>
</dbReference>
<dbReference type="PANTHER" id="PTHR10133:SF27">
    <property type="entry name" value="DNA POLYMERASE NU"/>
    <property type="match status" value="1"/>
</dbReference>
<dbReference type="Pfam" id="PF01367">
    <property type="entry name" value="5_3_exonuc"/>
    <property type="match status" value="1"/>
</dbReference>
<dbReference type="Pfam" id="PF02739">
    <property type="entry name" value="5_3_exonuc_N"/>
    <property type="match status" value="1"/>
</dbReference>
<dbReference type="Pfam" id="PF00476">
    <property type="entry name" value="DNA_pol_A"/>
    <property type="match status" value="1"/>
</dbReference>
<dbReference type="Pfam" id="PF22619">
    <property type="entry name" value="DNA_polI_exo1"/>
    <property type="match status" value="1"/>
</dbReference>
<dbReference type="PRINTS" id="PR00868">
    <property type="entry name" value="DNAPOLI"/>
</dbReference>
<dbReference type="SMART" id="SM00474">
    <property type="entry name" value="35EXOc"/>
    <property type="match status" value="1"/>
</dbReference>
<dbReference type="SMART" id="SM00475">
    <property type="entry name" value="53EXOc"/>
    <property type="match status" value="1"/>
</dbReference>
<dbReference type="SMART" id="SM00279">
    <property type="entry name" value="HhH2"/>
    <property type="match status" value="1"/>
</dbReference>
<dbReference type="SMART" id="SM00482">
    <property type="entry name" value="POLAc"/>
    <property type="match status" value="1"/>
</dbReference>
<dbReference type="SUPFAM" id="SSF47807">
    <property type="entry name" value="5' to 3' exonuclease, C-terminal subdomain"/>
    <property type="match status" value="1"/>
</dbReference>
<dbReference type="SUPFAM" id="SSF56672">
    <property type="entry name" value="DNA/RNA polymerases"/>
    <property type="match status" value="1"/>
</dbReference>
<dbReference type="SUPFAM" id="SSF88723">
    <property type="entry name" value="PIN domain-like"/>
    <property type="match status" value="1"/>
</dbReference>
<dbReference type="SUPFAM" id="SSF53098">
    <property type="entry name" value="Ribonuclease H-like"/>
    <property type="match status" value="1"/>
</dbReference>
<dbReference type="PROSITE" id="PS00447">
    <property type="entry name" value="DNA_POLYMERASE_A"/>
    <property type="match status" value="1"/>
</dbReference>
<feature type="chain" id="PRO_0000101247" description="DNA polymerase I">
    <location>
        <begin position="1"/>
        <end position="904"/>
    </location>
</feature>
<feature type="domain" description="5'-3' exonuclease" evidence="1">
    <location>
        <begin position="186"/>
        <end position="279"/>
    </location>
</feature>
<feature type="domain" description="3'-5' exonuclease" evidence="1">
    <location>
        <begin position="317"/>
        <end position="493"/>
    </location>
</feature>
<evidence type="ECO:0000255" key="1"/>
<evidence type="ECO:0000269" key="2">
    <source>
    </source>
</evidence>
<evidence type="ECO:0000269" key="3">
    <source>
    </source>
</evidence>
<evidence type="ECO:0000305" key="4"/>
<organism>
    <name type="scientific">Mycobacterium tuberculosis (strain ATCC 25618 / H37Rv)</name>
    <dbReference type="NCBI Taxonomy" id="83332"/>
    <lineage>
        <taxon>Bacteria</taxon>
        <taxon>Bacillati</taxon>
        <taxon>Actinomycetota</taxon>
        <taxon>Actinomycetes</taxon>
        <taxon>Mycobacteriales</taxon>
        <taxon>Mycobacteriaceae</taxon>
        <taxon>Mycobacterium</taxon>
        <taxon>Mycobacterium tuberculosis complex</taxon>
    </lineage>
</organism>
<reference key="1">
    <citation type="journal article" date="1993" name="Gene">
        <title>A PCR method for the sequence analysis of the gyrA, polA and rnhA gene segments from mycobacteria.</title>
        <authorList>
            <person name="Mizrahi V."/>
            <person name="Huberts P."/>
            <person name="Dawes S.S."/>
            <person name="Dudding L.R."/>
        </authorList>
    </citation>
    <scope>NUCLEOTIDE SEQUENCE [GENOMIC DNA]</scope>
    <source>
        <strain>ATCC 25618 / H37Rv</strain>
    </source>
</reference>
<reference key="2">
    <citation type="journal article" date="1998" name="Nature">
        <title>Deciphering the biology of Mycobacterium tuberculosis from the complete genome sequence.</title>
        <authorList>
            <person name="Cole S.T."/>
            <person name="Brosch R."/>
            <person name="Parkhill J."/>
            <person name="Garnier T."/>
            <person name="Churcher C.M."/>
            <person name="Harris D.E."/>
            <person name="Gordon S.V."/>
            <person name="Eiglmeier K."/>
            <person name="Gas S."/>
            <person name="Barry C.E. III"/>
            <person name="Tekaia F."/>
            <person name="Badcock K."/>
            <person name="Basham D."/>
            <person name="Brown D."/>
            <person name="Chillingworth T."/>
            <person name="Connor R."/>
            <person name="Davies R.M."/>
            <person name="Devlin K."/>
            <person name="Feltwell T."/>
            <person name="Gentles S."/>
            <person name="Hamlin N."/>
            <person name="Holroyd S."/>
            <person name="Hornsby T."/>
            <person name="Jagels K."/>
            <person name="Krogh A."/>
            <person name="McLean J."/>
            <person name="Moule S."/>
            <person name="Murphy L.D."/>
            <person name="Oliver S."/>
            <person name="Osborne J."/>
            <person name="Quail M.A."/>
            <person name="Rajandream M.A."/>
            <person name="Rogers J."/>
            <person name="Rutter S."/>
            <person name="Seeger K."/>
            <person name="Skelton S."/>
            <person name="Squares S."/>
            <person name="Squares R."/>
            <person name="Sulston J.E."/>
            <person name="Taylor K."/>
            <person name="Whitehead S."/>
            <person name="Barrell B.G."/>
        </authorList>
    </citation>
    <scope>NUCLEOTIDE SEQUENCE [LARGE SCALE GENOMIC DNA]</scope>
    <source>
        <strain>ATCC 25618 / H37Rv</strain>
    </source>
</reference>
<reference key="3">
    <citation type="journal article" date="2008" name="BMC Syst. Biol.">
        <title>targetTB: a target identification pipeline for Mycobacterium tuberculosis through an interactome, reactome and genome-scale structural analysis.</title>
        <authorList>
            <person name="Raman K."/>
            <person name="Yeturu K."/>
            <person name="Chandra N."/>
        </authorList>
    </citation>
    <scope>IDENTIFICATION AS A DRUG TARGET [LARGE SCALE ANALYSIS]</scope>
</reference>
<reference key="4">
    <citation type="journal article" date="2011" name="Mol. Cell. Proteomics">
        <title>Proteogenomic analysis of Mycobacterium tuberculosis by high resolution mass spectrometry.</title>
        <authorList>
            <person name="Kelkar D.S."/>
            <person name="Kumar D."/>
            <person name="Kumar P."/>
            <person name="Balakrishnan L."/>
            <person name="Muthusamy B."/>
            <person name="Yadav A.K."/>
            <person name="Shrivastava P."/>
            <person name="Marimuthu A."/>
            <person name="Anand S."/>
            <person name="Sundaram H."/>
            <person name="Kingsbury R."/>
            <person name="Harsha H.C."/>
            <person name="Nair B."/>
            <person name="Prasad T.S."/>
            <person name="Chauhan D.S."/>
            <person name="Katoch K."/>
            <person name="Katoch V.M."/>
            <person name="Kumar P."/>
            <person name="Chaerkady R."/>
            <person name="Ramachandran S."/>
            <person name="Dash D."/>
            <person name="Pandey A."/>
        </authorList>
    </citation>
    <scope>IDENTIFICATION BY MASS SPECTROMETRY [LARGE SCALE ANALYSIS]</scope>
    <source>
        <strain>ATCC 25618 / H37Rv</strain>
    </source>
</reference>
<reference key="5">
    <citation type="journal article" date="2020" name="Mol. Microbiol.">
        <title>Depletion of the DarG antitoxin in Mycobacterium tuberculosis triggers the DNA-damage response and leads to cell death.</title>
        <authorList>
            <person name="Zaveri A."/>
            <person name="Wang R."/>
            <person name="Botella L."/>
            <person name="Sharma R."/>
            <person name="Zhu L."/>
            <person name="Wallach J.B."/>
            <person name="Song N."/>
            <person name="Jansen R.S."/>
            <person name="Rhee K.Y."/>
            <person name="Ehrt S."/>
            <person name="Schnappinger D."/>
        </authorList>
    </citation>
    <scope>SUBUNIT</scope>
    <source>
        <strain>H37Rv</strain>
    </source>
</reference>
<keyword id="KW-0227">DNA damage</keyword>
<keyword id="KW-0234">DNA repair</keyword>
<keyword id="KW-0235">DNA replication</keyword>
<keyword id="KW-0238">DNA-binding</keyword>
<keyword id="KW-0239">DNA-directed DNA polymerase</keyword>
<keyword id="KW-0269">Exonuclease</keyword>
<keyword id="KW-0378">Hydrolase</keyword>
<keyword id="KW-0540">Nuclease</keyword>
<keyword id="KW-0548">Nucleotidyltransferase</keyword>
<keyword id="KW-1185">Reference proteome</keyword>
<keyword id="KW-0808">Transferase</keyword>
<accession>P9WNU5</accession>
<accession>L0TA70</accession>
<accession>P0A550</accession>
<accession>Q07700</accession>
<proteinExistence type="evidence at protein level"/>
<gene>
    <name type="primary">polA</name>
    <name type="ordered locus">Rv1629</name>
    <name type="ORF">MTCY01B2.21</name>
</gene>
<protein>
    <recommendedName>
        <fullName>DNA polymerase I</fullName>
        <shortName>POL I</shortName>
        <ecNumber>2.7.7.7</ecNumber>
    </recommendedName>
</protein>
<comment type="function">
    <text>In addition to polymerase activity, this DNA polymerase exhibits 3'-5' and 5'-3' exonuclease activity.</text>
</comment>
<comment type="catalytic activity">
    <reaction>
        <text>DNA(n) + a 2'-deoxyribonucleoside 5'-triphosphate = DNA(n+1) + diphosphate</text>
        <dbReference type="Rhea" id="RHEA:22508"/>
        <dbReference type="Rhea" id="RHEA-COMP:17339"/>
        <dbReference type="Rhea" id="RHEA-COMP:17340"/>
        <dbReference type="ChEBI" id="CHEBI:33019"/>
        <dbReference type="ChEBI" id="CHEBI:61560"/>
        <dbReference type="ChEBI" id="CHEBI:173112"/>
        <dbReference type="EC" id="2.7.7.7"/>
    </reaction>
</comment>
<comment type="subunit">
    <text evidence="2">Single-chain monomer with multiple functions. Co-immunoprecipitates with DarG in the presence and absence of darT (PubMed:32634279).</text>
</comment>
<comment type="miscellaneous">
    <text evidence="3">Was identified as a high-confidence drug target.</text>
</comment>
<comment type="similarity">
    <text evidence="4">Belongs to the DNA polymerase type-A family.</text>
</comment>
<sequence length="904" mass="98472">MVTTASAPSEDRAKPTLMLLDGNSLAFRAFYALPAENFKTRGGLTTNAVYGFTAMLINLLRDEAPTHIAAAFDVSRQTFRLQRYPEYKANRSSTPDEFAGQIDITKEVLGALGITVLSEPGFEADDLIATLATQAENEGYRVLVVTGDRDALQLVSDDVTVLYPRKGVSELTRFTPEAVVEKYGLTPRQYPDFAALRGDPSDNLPGIPGVGEKTAAKWIAEYGSLRSLVDNVDAVRGKVGDALRANLASVVRNRELTDLVRDVPLAQTPDTLRLQPWDRDHIHRLFDDLEFRVLRDRLFDTLAAAGGPEVDEGFDVRGGALAPGTVRQWLAEHAGDGRRAGLTVVGTHLPHGGDATAMAVAAADGEGAYLDTATLTPDDDAALAAWLADPAKPKALHEAKAAVHDLAGRGWTLEGVTSDTALAAYLVRPGQRSFTLDDLSLRYLRRELRAETPQQQQLSLLDDDDTDAETIQTTILRARAVIDLADALDAELARIDSTALLGEMELPVQRVLAKMESAGIAVDLPMLTELQSQFGDQIRDAAEAAYGVIGKQINLGSPKQLQVVLFDELGMPKTKRTKTGYTTDADALQSLFDKTGHPFLQHLLAHRDVTRLKVTVDGLLQAVAADGRIHTTFNQTIAATGRLSSTEPNLQNIPIRTDAGRRIRDAFVVGDGYAELMTADYSQIEMRIMAHLSGDEGLIEAFNTGEDLHSFVASRAFGVPIDEVTGELRRRVKAMSYGLAYGLSAYGLSQQLKISTEEANEQMDAYFARFGGVRDYLRAVVERARKDGYTSTVLGRRRYLPELDSSNRQVREAAERAALNAPIQGSAADIIKVAMIQVDKALNEAQLASRMLLQVHDELLFEIAPGERERVEALVRDKMGGAYPLDVPLEVSVGYGRSWDAAAH</sequence>
<name>DPO1_MYCTU</name>